<sequence length="488" mass="52223">MSFNHKTIEELHDLLVAKEISATELTQKTLEDIKSREEAVGSFITVSEEAALKQAAAIDAKGIDADNLMSGIPLAVKDNISTKGTLTTAASKMLYNYEPIFDATSVANAYAKDMIVIGKTNMDEFAMGGSTETSYFKKTKNAWDHTKVPGGSSGGSATAVASGQVRLSLGSDTGGSIRQPAAFNGVVGLKPTYGTVSRYGLIAFGSSLDQIGPFAPTVKENAQLLNVIASSDVKDATSAPVRIADYTSKIGRDIKGMKIALPKEYLGEGIDPEIKETVLAAAKQFEALGATVEEVSLPHSKYGVAVYYIIASSEASSNLQRFDGIRYGFRADDAKNLDEIYVNTRSQGFGDEVKRRIMLGTFSLSSGYYDAYFKKAGQVRTLIIEDFDKVFADYDLILGPTTPTVAFGLDTLNHDPVAMYLADLLTIPVNLAGLPGISIPAGFVDGLPVGLQLIGPKYAEETIYQAAAAFETVTDYHKQQPIIFGGDK</sequence>
<feature type="chain" id="PRO_1000015913" description="Glutamyl-tRNA(Gln) amidotransferase subunit A">
    <location>
        <begin position="1"/>
        <end position="488"/>
    </location>
</feature>
<feature type="active site" description="Charge relay system" evidence="1">
    <location>
        <position position="77"/>
    </location>
</feature>
<feature type="active site" description="Charge relay system" evidence="1">
    <location>
        <position position="152"/>
    </location>
</feature>
<feature type="active site" description="Acyl-ester intermediate" evidence="1">
    <location>
        <position position="176"/>
    </location>
</feature>
<keyword id="KW-0067">ATP-binding</keyword>
<keyword id="KW-0436">Ligase</keyword>
<keyword id="KW-0547">Nucleotide-binding</keyword>
<keyword id="KW-0648">Protein biosynthesis</keyword>
<proteinExistence type="inferred from homology"/>
<name>GATA_STRPD</name>
<protein>
    <recommendedName>
        <fullName evidence="1">Glutamyl-tRNA(Gln) amidotransferase subunit A</fullName>
        <shortName evidence="1">Glu-ADT subunit A</shortName>
        <ecNumber evidence="1">6.3.5.7</ecNumber>
    </recommendedName>
</protein>
<evidence type="ECO:0000255" key="1">
    <source>
        <dbReference type="HAMAP-Rule" id="MF_00120"/>
    </source>
</evidence>
<comment type="function">
    <text evidence="1">Allows the formation of correctly charged Gln-tRNA(Gln) through the transamidation of misacylated Glu-tRNA(Gln) in organisms which lack glutaminyl-tRNA synthetase. The reaction takes place in the presence of glutamine and ATP through an activated gamma-phospho-Glu-tRNA(Gln).</text>
</comment>
<comment type="catalytic activity">
    <reaction evidence="1">
        <text>L-glutamyl-tRNA(Gln) + L-glutamine + ATP + H2O = L-glutaminyl-tRNA(Gln) + L-glutamate + ADP + phosphate + H(+)</text>
        <dbReference type="Rhea" id="RHEA:17521"/>
        <dbReference type="Rhea" id="RHEA-COMP:9681"/>
        <dbReference type="Rhea" id="RHEA-COMP:9684"/>
        <dbReference type="ChEBI" id="CHEBI:15377"/>
        <dbReference type="ChEBI" id="CHEBI:15378"/>
        <dbReference type="ChEBI" id="CHEBI:29985"/>
        <dbReference type="ChEBI" id="CHEBI:30616"/>
        <dbReference type="ChEBI" id="CHEBI:43474"/>
        <dbReference type="ChEBI" id="CHEBI:58359"/>
        <dbReference type="ChEBI" id="CHEBI:78520"/>
        <dbReference type="ChEBI" id="CHEBI:78521"/>
        <dbReference type="ChEBI" id="CHEBI:456216"/>
        <dbReference type="EC" id="6.3.5.7"/>
    </reaction>
</comment>
<comment type="subunit">
    <text evidence="1">Heterotrimer of A, B and C subunits.</text>
</comment>
<comment type="similarity">
    <text evidence="1">Belongs to the amidase family. GatA subfamily.</text>
</comment>
<reference key="1">
    <citation type="journal article" date="2006" name="Proc. Natl. Acad. Sci. U.S.A.">
        <title>Molecular genetic anatomy of inter- and intraserotype variation in the human bacterial pathogen group A Streptococcus.</title>
        <authorList>
            <person name="Beres S.B."/>
            <person name="Richter E.W."/>
            <person name="Nagiec M.J."/>
            <person name="Sumby P."/>
            <person name="Porcella S.F."/>
            <person name="DeLeo F.R."/>
            <person name="Musser J.M."/>
        </authorList>
    </citation>
    <scope>NUCLEOTIDE SEQUENCE [LARGE SCALE GENOMIC DNA]</scope>
    <source>
        <strain>MGAS10270</strain>
    </source>
</reference>
<gene>
    <name evidence="1" type="primary">gatA</name>
    <name type="ordered locus">MGAS10270_Spy1575</name>
</gene>
<accession>Q1JFB9</accession>
<organism>
    <name type="scientific">Streptococcus pyogenes serotype M2 (strain MGAS10270)</name>
    <dbReference type="NCBI Taxonomy" id="370552"/>
    <lineage>
        <taxon>Bacteria</taxon>
        <taxon>Bacillati</taxon>
        <taxon>Bacillota</taxon>
        <taxon>Bacilli</taxon>
        <taxon>Lactobacillales</taxon>
        <taxon>Streptococcaceae</taxon>
        <taxon>Streptococcus</taxon>
    </lineage>
</organism>
<dbReference type="EC" id="6.3.5.7" evidence="1"/>
<dbReference type="EMBL" id="CP000260">
    <property type="protein sequence ID" value="ABF34640.1"/>
    <property type="molecule type" value="Genomic_DNA"/>
</dbReference>
<dbReference type="SMR" id="Q1JFB9"/>
<dbReference type="KEGG" id="sph:MGAS10270_Spy1575"/>
<dbReference type="HOGENOM" id="CLU_009600_0_3_9"/>
<dbReference type="Proteomes" id="UP000002436">
    <property type="component" value="Chromosome"/>
</dbReference>
<dbReference type="GO" id="GO:0030956">
    <property type="term" value="C:glutamyl-tRNA(Gln) amidotransferase complex"/>
    <property type="evidence" value="ECO:0007669"/>
    <property type="project" value="InterPro"/>
</dbReference>
<dbReference type="GO" id="GO:0005524">
    <property type="term" value="F:ATP binding"/>
    <property type="evidence" value="ECO:0007669"/>
    <property type="project" value="UniProtKB-KW"/>
</dbReference>
<dbReference type="GO" id="GO:0050567">
    <property type="term" value="F:glutaminyl-tRNA synthase (glutamine-hydrolyzing) activity"/>
    <property type="evidence" value="ECO:0007669"/>
    <property type="project" value="UniProtKB-UniRule"/>
</dbReference>
<dbReference type="GO" id="GO:0006412">
    <property type="term" value="P:translation"/>
    <property type="evidence" value="ECO:0007669"/>
    <property type="project" value="UniProtKB-UniRule"/>
</dbReference>
<dbReference type="Gene3D" id="3.90.1300.10">
    <property type="entry name" value="Amidase signature (AS) domain"/>
    <property type="match status" value="1"/>
</dbReference>
<dbReference type="HAMAP" id="MF_00120">
    <property type="entry name" value="GatA"/>
    <property type="match status" value="1"/>
</dbReference>
<dbReference type="InterPro" id="IPR000120">
    <property type="entry name" value="Amidase"/>
</dbReference>
<dbReference type="InterPro" id="IPR020556">
    <property type="entry name" value="Amidase_CS"/>
</dbReference>
<dbReference type="InterPro" id="IPR023631">
    <property type="entry name" value="Amidase_dom"/>
</dbReference>
<dbReference type="InterPro" id="IPR036928">
    <property type="entry name" value="AS_sf"/>
</dbReference>
<dbReference type="InterPro" id="IPR004412">
    <property type="entry name" value="GatA"/>
</dbReference>
<dbReference type="NCBIfam" id="TIGR00132">
    <property type="entry name" value="gatA"/>
    <property type="match status" value="1"/>
</dbReference>
<dbReference type="PANTHER" id="PTHR11895:SF151">
    <property type="entry name" value="GLUTAMYL-TRNA(GLN) AMIDOTRANSFERASE SUBUNIT A"/>
    <property type="match status" value="1"/>
</dbReference>
<dbReference type="PANTHER" id="PTHR11895">
    <property type="entry name" value="TRANSAMIDASE"/>
    <property type="match status" value="1"/>
</dbReference>
<dbReference type="Pfam" id="PF01425">
    <property type="entry name" value="Amidase"/>
    <property type="match status" value="1"/>
</dbReference>
<dbReference type="SUPFAM" id="SSF75304">
    <property type="entry name" value="Amidase signature (AS) enzymes"/>
    <property type="match status" value="1"/>
</dbReference>
<dbReference type="PROSITE" id="PS00571">
    <property type="entry name" value="AMIDASES"/>
    <property type="match status" value="1"/>
</dbReference>